<gene>
    <name type="primary">Vma12</name>
    <name type="synonym">Tmem199</name>
</gene>
<feature type="initiator methionine" description="Removed" evidence="1">
    <location>
        <position position="1"/>
    </location>
</feature>
<feature type="chain" id="PRO_0000079299" description="Vacuolar ATPase assembly protein VMA12">
    <location>
        <begin position="2"/>
        <end position="208"/>
    </location>
</feature>
<feature type="transmembrane region" description="Helical" evidence="2">
    <location>
        <begin position="146"/>
        <end position="166"/>
    </location>
</feature>
<feature type="transmembrane region" description="Helical" evidence="2">
    <location>
        <begin position="179"/>
        <end position="199"/>
    </location>
</feature>
<feature type="modified residue" description="N-acetylalanine" evidence="1">
    <location>
        <position position="2"/>
    </location>
</feature>
<accession>Q5SYH2</accession>
<proteinExistence type="evidence at protein level"/>
<keyword id="KW-0007">Acetylation</keyword>
<keyword id="KW-0968">Cytoplasmic vesicle</keyword>
<keyword id="KW-0256">Endoplasmic reticulum</keyword>
<keyword id="KW-0472">Membrane</keyword>
<keyword id="KW-1185">Reference proteome</keyword>
<keyword id="KW-0812">Transmembrane</keyword>
<keyword id="KW-1133">Transmembrane helix</keyword>
<reference key="1">
    <citation type="journal article" date="2009" name="PLoS Biol.">
        <title>Lineage-specific biology revealed by a finished genome assembly of the mouse.</title>
        <authorList>
            <person name="Church D.M."/>
            <person name="Goodstadt L."/>
            <person name="Hillier L.W."/>
            <person name="Zody M.C."/>
            <person name="Goldstein S."/>
            <person name="She X."/>
            <person name="Bult C.J."/>
            <person name="Agarwala R."/>
            <person name="Cherry J.L."/>
            <person name="DiCuccio M."/>
            <person name="Hlavina W."/>
            <person name="Kapustin Y."/>
            <person name="Meric P."/>
            <person name="Maglott D."/>
            <person name="Birtle Z."/>
            <person name="Marques A.C."/>
            <person name="Graves T."/>
            <person name="Zhou S."/>
            <person name="Teague B."/>
            <person name="Potamousis K."/>
            <person name="Churas C."/>
            <person name="Place M."/>
            <person name="Herschleb J."/>
            <person name="Runnheim R."/>
            <person name="Forrest D."/>
            <person name="Amos-Landgraf J."/>
            <person name="Schwartz D.C."/>
            <person name="Cheng Z."/>
            <person name="Lindblad-Toh K."/>
            <person name="Eichler E.E."/>
            <person name="Ponting C.P."/>
        </authorList>
    </citation>
    <scope>NUCLEOTIDE SEQUENCE [LARGE SCALE GENOMIC DNA]</scope>
    <source>
        <strain>C57BL/6J</strain>
    </source>
</reference>
<reference key="2">
    <citation type="journal article" date="2010" name="Cell">
        <title>A tissue-specific atlas of mouse protein phosphorylation and expression.</title>
        <authorList>
            <person name="Huttlin E.L."/>
            <person name="Jedrychowski M.P."/>
            <person name="Elias J.E."/>
            <person name="Goswami T."/>
            <person name="Rad R."/>
            <person name="Beausoleil S.A."/>
            <person name="Villen J."/>
            <person name="Haas W."/>
            <person name="Sowa M.E."/>
            <person name="Gygi S.P."/>
        </authorList>
    </citation>
    <scope>IDENTIFICATION BY MASS SPECTROMETRY [LARGE SCALE ANALYSIS]</scope>
    <source>
        <tissue>Kidney</tissue>
        <tissue>Pancreas</tissue>
        <tissue>Spleen</tissue>
        <tissue>Testis</tissue>
    </source>
</reference>
<reference key="3">
    <citation type="journal article" date="2021" name="Nat. Chem. Biol.">
        <title>A proteome-wide map of 20(S)-hydroxycholesterol interactors in cell membranes.</title>
        <authorList>
            <person name="Cheng Y.S."/>
            <person name="Zhang T."/>
            <person name="Ma X."/>
            <person name="Pratuangtham S."/>
            <person name="Zhang G.C."/>
            <person name="Ondrus A.A."/>
            <person name="Mafi A."/>
            <person name="Lomenick B."/>
            <person name="Jones J.J."/>
            <person name="Ondrus A.E."/>
        </authorList>
    </citation>
    <scope>FUNCTION</scope>
</reference>
<dbReference type="EMBL" id="AL591177">
    <property type="status" value="NOT_ANNOTATED_CDS"/>
    <property type="molecule type" value="Genomic_DNA"/>
</dbReference>
<dbReference type="CCDS" id="CCDS25108.1"/>
<dbReference type="RefSeq" id="NP_954669.2">
    <property type="nucleotide sequence ID" value="NM_199199.3"/>
</dbReference>
<dbReference type="BioGRID" id="228816">
    <property type="interactions" value="3"/>
</dbReference>
<dbReference type="FunCoup" id="Q5SYH2">
    <property type="interactions" value="3045"/>
</dbReference>
<dbReference type="STRING" id="10090.ENSMUSP00000058599"/>
<dbReference type="iPTMnet" id="Q5SYH2"/>
<dbReference type="PhosphoSitePlus" id="Q5SYH2"/>
<dbReference type="PaxDb" id="10090-ENSMUSP00000058599"/>
<dbReference type="ProteomicsDB" id="260685"/>
<dbReference type="Pumba" id="Q5SYH2"/>
<dbReference type="TopDownProteomics" id="Q5SYH2"/>
<dbReference type="Antibodypedia" id="34886">
    <property type="antibodies" value="39 antibodies from 20 providers"/>
</dbReference>
<dbReference type="Ensembl" id="ENSMUST00000052566.8">
    <property type="protein sequence ID" value="ENSMUSP00000058599.8"/>
    <property type="gene ID" value="ENSMUSG00000051232.14"/>
</dbReference>
<dbReference type="GeneID" id="195040"/>
<dbReference type="KEGG" id="mmu:195040"/>
<dbReference type="UCSC" id="uc007kjn.1">
    <property type="organism name" value="mouse"/>
</dbReference>
<dbReference type="AGR" id="MGI:2144113"/>
<dbReference type="CTD" id="195040"/>
<dbReference type="MGI" id="MGI:2144113">
    <property type="gene designation" value="Tmem199"/>
</dbReference>
<dbReference type="VEuPathDB" id="HostDB:ENSMUSG00000051232"/>
<dbReference type="eggNOG" id="ENOG502RXKD">
    <property type="taxonomic scope" value="Eukaryota"/>
</dbReference>
<dbReference type="GeneTree" id="ENSGT00390000014591"/>
<dbReference type="HOGENOM" id="CLU_114590_0_0_1"/>
<dbReference type="InParanoid" id="Q5SYH2"/>
<dbReference type="OMA" id="RMTRNVN"/>
<dbReference type="OrthoDB" id="19981at2759"/>
<dbReference type="PhylomeDB" id="Q5SYH2"/>
<dbReference type="TreeFam" id="TF314610"/>
<dbReference type="BioGRID-ORCS" id="195040">
    <property type="hits" value="20 hits in 79 CRISPR screens"/>
</dbReference>
<dbReference type="ChiTaRS" id="Tmem199">
    <property type="organism name" value="mouse"/>
</dbReference>
<dbReference type="PRO" id="PR:Q5SYH2"/>
<dbReference type="Proteomes" id="UP000000589">
    <property type="component" value="Chromosome 11"/>
</dbReference>
<dbReference type="RNAct" id="Q5SYH2">
    <property type="molecule type" value="protein"/>
</dbReference>
<dbReference type="Bgee" id="ENSMUSG00000051232">
    <property type="expression patterns" value="Expressed in spermatocyte and 263 other cell types or tissues"/>
</dbReference>
<dbReference type="ExpressionAtlas" id="Q5SYH2">
    <property type="expression patterns" value="baseline and differential"/>
</dbReference>
<dbReference type="GO" id="GO:0030663">
    <property type="term" value="C:COPI-coated vesicle membrane"/>
    <property type="evidence" value="ECO:0000250"/>
    <property type="project" value="UniProtKB"/>
</dbReference>
<dbReference type="GO" id="GO:0005783">
    <property type="term" value="C:endoplasmic reticulum"/>
    <property type="evidence" value="ECO:0000250"/>
    <property type="project" value="UniProtKB"/>
</dbReference>
<dbReference type="GO" id="GO:0005789">
    <property type="term" value="C:endoplasmic reticulum membrane"/>
    <property type="evidence" value="ECO:0007669"/>
    <property type="project" value="UniProtKB-SubCell"/>
</dbReference>
<dbReference type="GO" id="GO:0033116">
    <property type="term" value="C:endoplasmic reticulum-Golgi intermediate compartment membrane"/>
    <property type="evidence" value="ECO:0000250"/>
    <property type="project" value="UniProtKB"/>
</dbReference>
<dbReference type="GO" id="GO:0005764">
    <property type="term" value="C:lysosome"/>
    <property type="evidence" value="ECO:0007669"/>
    <property type="project" value="GOC"/>
</dbReference>
<dbReference type="GO" id="GO:0016471">
    <property type="term" value="C:vacuolar proton-transporting V-type ATPase complex"/>
    <property type="evidence" value="ECO:0000250"/>
    <property type="project" value="UniProtKB"/>
</dbReference>
<dbReference type="GO" id="GO:0008142">
    <property type="term" value="F:oxysterol binding"/>
    <property type="evidence" value="ECO:0000315"/>
    <property type="project" value="UniProtKB"/>
</dbReference>
<dbReference type="GO" id="GO:0036295">
    <property type="term" value="P:cellular response to increased oxygen levels"/>
    <property type="evidence" value="ECO:0000250"/>
    <property type="project" value="UniProtKB"/>
</dbReference>
<dbReference type="GO" id="GO:0006879">
    <property type="term" value="P:intracellular iron ion homeostasis"/>
    <property type="evidence" value="ECO:0000250"/>
    <property type="project" value="UniProtKB"/>
</dbReference>
<dbReference type="GO" id="GO:0007042">
    <property type="term" value="P:lysosomal lumen acidification"/>
    <property type="evidence" value="ECO:0000250"/>
    <property type="project" value="UniProtKB"/>
</dbReference>
<dbReference type="GO" id="GO:1905146">
    <property type="term" value="P:lysosomal protein catabolic process"/>
    <property type="evidence" value="ECO:0000250"/>
    <property type="project" value="UniProtKB"/>
</dbReference>
<dbReference type="GO" id="GO:0070072">
    <property type="term" value="P:vacuolar proton-transporting V-type ATPase complex assembly"/>
    <property type="evidence" value="ECO:0007669"/>
    <property type="project" value="InterPro"/>
</dbReference>
<dbReference type="InterPro" id="IPR021013">
    <property type="entry name" value="ATPase_Vma12"/>
</dbReference>
<dbReference type="PANTHER" id="PTHR31394">
    <property type="entry name" value="TRANSMEMBRANE PROTEIN 199"/>
    <property type="match status" value="1"/>
</dbReference>
<dbReference type="PANTHER" id="PTHR31394:SF1">
    <property type="entry name" value="TRANSMEMBRANE PROTEIN 199"/>
    <property type="match status" value="1"/>
</dbReference>
<dbReference type="Pfam" id="PF11712">
    <property type="entry name" value="Vma12"/>
    <property type="match status" value="1"/>
</dbReference>
<protein>
    <recommendedName>
        <fullName>Vacuolar ATPase assembly protein VMA12</fullName>
    </recommendedName>
    <alternativeName>
        <fullName>Transmembrane protein 199</fullName>
    </alternativeName>
</protein>
<sequence length="208" mass="23099">MASSLLAGERLVRALGPGGELEREQLPRKLRAQLEAALGKKHAGSDNATGPRRLVSFRLIRDLHQHLRERNSRLYLHELLEGSDIYFPEIVKPPRNPELVARLEKIKIQLANEEYKRITRNVTCQDAQCGGTLSDLGKQVRSVKALVVTIFNFIITVAAAFVCTYLGSQYVFTEMASRVLAALIVASVVGLAELYVMVRAMEGELGEL</sequence>
<name>VMA12_MOUSE</name>
<evidence type="ECO:0000250" key="1">
    <source>
        <dbReference type="UniProtKB" id="Q8N511"/>
    </source>
</evidence>
<evidence type="ECO:0000255" key="2"/>
<evidence type="ECO:0000269" key="3">
    <source>
    </source>
</evidence>
<organism>
    <name type="scientific">Mus musculus</name>
    <name type="common">Mouse</name>
    <dbReference type="NCBI Taxonomy" id="10090"/>
    <lineage>
        <taxon>Eukaryota</taxon>
        <taxon>Metazoa</taxon>
        <taxon>Chordata</taxon>
        <taxon>Craniata</taxon>
        <taxon>Vertebrata</taxon>
        <taxon>Euteleostomi</taxon>
        <taxon>Mammalia</taxon>
        <taxon>Eutheria</taxon>
        <taxon>Euarchontoglires</taxon>
        <taxon>Glires</taxon>
        <taxon>Rodentia</taxon>
        <taxon>Myomorpha</taxon>
        <taxon>Muroidea</taxon>
        <taxon>Muridae</taxon>
        <taxon>Murinae</taxon>
        <taxon>Mus</taxon>
        <taxon>Mus</taxon>
    </lineage>
</organism>
<comment type="function">
    <text evidence="1 3">Accessory component of the proton-transporting vacuolar (V)-ATPase protein pump involved in intracellular iron homeostasis. In aerobic conditions, required for intracellular iron homeostasis, thus triggering the activity of Fe(2+) prolyl hydroxylase (PHD) enzymes, and leading to HIF1A hydroxylation and subsequent proteasomal degradation. Necessary for endolysosomal acidification and lysosomal degradation (By similarity). May be involved in Golgi homeostasis (By similarity). Binds 20(S)-hydroxycholesterol (20(S)-OHC) (PubMed:34799735).</text>
</comment>
<comment type="subunit">
    <text evidence="1">Accessory component of the multisubunit proton-transporting vacuolar (V)-ATPase protein pump.</text>
</comment>
<comment type="subcellular location">
    <subcellularLocation>
        <location evidence="1">Cytoplasmic vesicle</location>
        <location evidence="1">COPI-coated vesicle membrane</location>
        <topology evidence="2">Multi-pass membrane protein</topology>
    </subcellularLocation>
    <subcellularLocation>
        <location evidence="1">Endoplasmic reticulum-Golgi intermediate compartment membrane</location>
        <topology evidence="2">Multi-pass membrane protein</topology>
    </subcellularLocation>
    <subcellularLocation>
        <location evidence="1">Endoplasmic reticulum membrane</location>
        <topology evidence="2">Multi-pass membrane protein</topology>
    </subcellularLocation>
    <text evidence="1">Partial colocalization with GOLGB1.</text>
</comment>